<gene>
    <name type="primary">ctr9</name>
    <name type="synonym">sh2bp1</name>
</gene>
<evidence type="ECO:0000250" key="1">
    <source>
        <dbReference type="UniProtKB" id="Q62018"/>
    </source>
</evidence>
<evidence type="ECO:0000250" key="2">
    <source>
        <dbReference type="UniProtKB" id="Q6PD62"/>
    </source>
</evidence>
<evidence type="ECO:0000256" key="3">
    <source>
        <dbReference type="SAM" id="MobiDB-lite"/>
    </source>
</evidence>
<feature type="chain" id="PRO_0000231591" description="RNA polymerase-associated protein CTR9 homolog">
    <location>
        <begin position="1"/>
        <end position="1172"/>
    </location>
</feature>
<feature type="repeat" description="TPR 1">
    <location>
        <begin position="41"/>
        <end position="75"/>
    </location>
</feature>
<feature type="repeat" description="TPR 2">
    <location>
        <begin position="129"/>
        <end position="162"/>
    </location>
</feature>
<feature type="repeat" description="TPR 3">
    <location>
        <begin position="163"/>
        <end position="196"/>
    </location>
</feature>
<feature type="repeat" description="TPR 4">
    <location>
        <begin position="198"/>
        <end position="231"/>
    </location>
</feature>
<feature type="repeat" description="TPR 5">
    <location>
        <begin position="235"/>
        <end position="268"/>
    </location>
</feature>
<feature type="repeat" description="TPR 6">
    <location>
        <begin position="306"/>
        <end position="339"/>
    </location>
</feature>
<feature type="repeat" description="TPR 7">
    <location>
        <begin position="341"/>
        <end position="374"/>
    </location>
</feature>
<feature type="repeat" description="TPR 8">
    <location>
        <begin position="412"/>
        <end position="444"/>
    </location>
</feature>
<feature type="repeat" description="TPR 9">
    <location>
        <begin position="451"/>
        <end position="484"/>
    </location>
</feature>
<feature type="repeat" description="TPR 10">
    <location>
        <begin position="497"/>
        <end position="530"/>
    </location>
</feature>
<feature type="repeat" description="TPR 11">
    <location>
        <begin position="531"/>
        <end position="564"/>
    </location>
</feature>
<feature type="repeat" description="TPR 12">
    <location>
        <begin position="566"/>
        <end position="598"/>
    </location>
</feature>
<feature type="repeat" description="TPR 13">
    <location>
        <begin position="613"/>
        <end position="646"/>
    </location>
</feature>
<feature type="repeat" description="TPR 14">
    <location>
        <begin position="648"/>
        <end position="680"/>
    </location>
</feature>
<feature type="repeat" description="TPR 15">
    <location>
        <begin position="681"/>
        <end position="714"/>
    </location>
</feature>
<feature type="repeat" description="TPR 16">
    <location>
        <begin position="717"/>
        <end position="750"/>
    </location>
</feature>
<feature type="region of interest" description="Disordered" evidence="3">
    <location>
        <begin position="889"/>
        <end position="1172"/>
    </location>
</feature>
<feature type="compositionally biased region" description="Acidic residues" evidence="3">
    <location>
        <begin position="921"/>
        <end position="932"/>
    </location>
</feature>
<feature type="compositionally biased region" description="Gly residues" evidence="3">
    <location>
        <begin position="944"/>
        <end position="954"/>
    </location>
</feature>
<feature type="compositionally biased region" description="Basic residues" evidence="3">
    <location>
        <begin position="965"/>
        <end position="975"/>
    </location>
</feature>
<feature type="compositionally biased region" description="Basic residues" evidence="3">
    <location>
        <begin position="991"/>
        <end position="1001"/>
    </location>
</feature>
<feature type="compositionally biased region" description="Basic and acidic residues" evidence="3">
    <location>
        <begin position="1032"/>
        <end position="1042"/>
    </location>
</feature>
<feature type="compositionally biased region" description="Polar residues" evidence="3">
    <location>
        <begin position="1068"/>
        <end position="1093"/>
    </location>
</feature>
<feature type="compositionally biased region" description="Polar residues" evidence="3">
    <location>
        <begin position="1105"/>
        <end position="1134"/>
    </location>
</feature>
<feature type="compositionally biased region" description="Polar residues" evidence="3">
    <location>
        <begin position="1149"/>
        <end position="1159"/>
    </location>
</feature>
<feature type="compositionally biased region" description="Basic and acidic residues" evidence="3">
    <location>
        <begin position="1160"/>
        <end position="1172"/>
    </location>
</feature>
<reference key="1">
    <citation type="submission" date="2004-07" db="EMBL/GenBank/DDBJ databases">
        <authorList>
            <consortium name="NIH - Xenopus Gene Collection (XGC) project"/>
        </authorList>
    </citation>
    <scope>NUCLEOTIDE SEQUENCE [LARGE SCALE MRNA]</scope>
    <source>
        <tissue>Embryo</tissue>
    </source>
</reference>
<organism>
    <name type="scientific">Xenopus tropicalis</name>
    <name type="common">Western clawed frog</name>
    <name type="synonym">Silurana tropicalis</name>
    <dbReference type="NCBI Taxonomy" id="8364"/>
    <lineage>
        <taxon>Eukaryota</taxon>
        <taxon>Metazoa</taxon>
        <taxon>Chordata</taxon>
        <taxon>Craniata</taxon>
        <taxon>Vertebrata</taxon>
        <taxon>Euteleostomi</taxon>
        <taxon>Amphibia</taxon>
        <taxon>Batrachia</taxon>
        <taxon>Anura</taxon>
        <taxon>Pipoidea</taxon>
        <taxon>Pipidae</taxon>
        <taxon>Xenopodinae</taxon>
        <taxon>Xenopus</taxon>
        <taxon>Silurana</taxon>
    </lineage>
</organism>
<sequence>MSRGSIEIPLRDTDEVIELDFDQLPEGDEVISILKQEHTQLHIWIALGLEYYKQVKTEDFVKLLEAARIDGNLDYRDHEKDQMTCLDTLAAYYVQQARKEKNKDNKKELITQATLLYTMADKIIMYDQNHLLGRACFCLLEGDKMDQADAQFHFVLNQSPNNIPALLGKACISFNKKDYRGALAYYKKALRTNPGCPAGVRLGMGHCFVKLNKLDKARLAFGRALDLNPTCVGALVGLAVLELNNKEADSIKNGVQLLSKAYTIDPSNPMVLNHLANHFFFKKDYSKVQHLALHAFHNTEVEAMQAESCYQLARSFHVQEDYDQAFQYYYQATQFAAASFVLPFFGLGQMYIYRGDKENASQCFEKVLKAYPNNYETMKILGSLYAASDDQEKRDIAKSHLKKVTEQYPDDVEAWIELAQILEQTDIQNALSAYGTATRILQEKVQADVPPEILNNVGALHFRLGNLGEAKKYFLASLDRAKAEAEHDEHYYNAISVTTTYNLARLYEGLCEFHESEKLYKNILREHPNYVDCYLRLGAMARDKGNFYEASDWFKEALQINQDHPDAWSLIGNLHLAKQEWGPGQKKFERILKQPSTQNDTYSMLALGNVWLQTLHQPTRDREKEKRHQDRALAIYKQVLRNDSKNLYAANGIGAVLAHKGYVREARDVFAQVREATADISDVWLNLAHIYVEQKQYISAVQMYENCLRKFYKHQNTEVLLYLARALFKCGKLQECKQILLKARHVAPNDTVLMFNVALVLQRLATLVLKDEKSNLKAVLNAVKELELAHRYFNYLSKVGDKMRFDLALAASEARQCSDLLSQAQYHVARARKQDEEEKELRAKQEQEKEILRQKLIKEQEEKRLKEIEEQKKLLEQRAQYVEKTRNLLNFTGEMETPKEKKQRGGGGGGGGRRSKKNGEFDEFVNDDSDEDLAPRKKKRKKGGGSSGSGGEQGEGGEEGEGGEKKKKKRRKRPQKGGDGSDDDEDQAPQPKKRQPKKREKPAKFERTPPSMKGKIKSKAIISSSEDDSDEDKLKIADEGHGRGSNSDSDEGPRTQAKKRIMSDSDSDNANKSGSGAGSPQKSPQSDGDSDNNAWARKRRRQDSGSDNDSAQSRRSSGGSDNESRAASRSPESQRGSDRGSDNEGSARASPNESEQEASNNEKSDRGSDDSD</sequence>
<proteinExistence type="evidence at transcript level"/>
<accession>Q6DEU9</accession>
<name>CTR9_XENTR</name>
<dbReference type="EMBL" id="BC076995">
    <property type="protein sequence ID" value="AAH76995.1"/>
    <property type="molecule type" value="mRNA"/>
</dbReference>
<dbReference type="RefSeq" id="NP_001005076.1">
    <property type="nucleotide sequence ID" value="NM_001005076.1"/>
</dbReference>
<dbReference type="SMR" id="Q6DEU9"/>
<dbReference type="FunCoup" id="Q6DEU9">
    <property type="interactions" value="3424"/>
</dbReference>
<dbReference type="STRING" id="8364.ENSXETP00000025818"/>
<dbReference type="PaxDb" id="8364-ENSXETP00000029922"/>
<dbReference type="DNASU" id="448648"/>
<dbReference type="GeneID" id="448648"/>
<dbReference type="KEGG" id="xtr:448648"/>
<dbReference type="AGR" id="Xenbase:XB-GENE-5946075"/>
<dbReference type="CTD" id="9646"/>
<dbReference type="Xenbase" id="XB-GENE-5946075">
    <property type="gene designation" value="ctr9"/>
</dbReference>
<dbReference type="eggNOG" id="KOG2002">
    <property type="taxonomic scope" value="Eukaryota"/>
</dbReference>
<dbReference type="InParanoid" id="Q6DEU9"/>
<dbReference type="OMA" id="EHWLTIA"/>
<dbReference type="OrthoDB" id="343875at2759"/>
<dbReference type="Reactome" id="R-XTR-112382">
    <property type="pathway name" value="Formation of RNA Pol II elongation complex"/>
</dbReference>
<dbReference type="Reactome" id="R-XTR-674695">
    <property type="pathway name" value="RNA Polymerase II Pre-transcription Events"/>
</dbReference>
<dbReference type="Reactome" id="R-XTR-75955">
    <property type="pathway name" value="RNA Polymerase II Transcription Elongation"/>
</dbReference>
<dbReference type="Reactome" id="R-XTR-8866654">
    <property type="pathway name" value="E3 ubiquitin ligases ubiquitinate target proteins"/>
</dbReference>
<dbReference type="Proteomes" id="UP000008143">
    <property type="component" value="Chromosome 4"/>
</dbReference>
<dbReference type="GO" id="GO:0016593">
    <property type="term" value="C:Cdc73/Paf1 complex"/>
    <property type="evidence" value="ECO:0000250"/>
    <property type="project" value="UniProtKB"/>
</dbReference>
<dbReference type="GO" id="GO:0000791">
    <property type="term" value="C:euchromatin"/>
    <property type="evidence" value="ECO:0000250"/>
    <property type="project" value="UniProtKB"/>
</dbReference>
<dbReference type="GO" id="GO:0016607">
    <property type="term" value="C:nuclear speck"/>
    <property type="evidence" value="ECO:0007669"/>
    <property type="project" value="UniProtKB-SubCell"/>
</dbReference>
<dbReference type="GO" id="GO:0001711">
    <property type="term" value="P:endodermal cell fate commitment"/>
    <property type="evidence" value="ECO:0000250"/>
    <property type="project" value="UniProtKB"/>
</dbReference>
<dbReference type="GO" id="GO:0045638">
    <property type="term" value="P:negative regulation of myeloid cell differentiation"/>
    <property type="evidence" value="ECO:0000250"/>
    <property type="project" value="UniProtKB"/>
</dbReference>
<dbReference type="GO" id="GO:0000122">
    <property type="term" value="P:negative regulation of transcription by RNA polymerase II"/>
    <property type="evidence" value="ECO:0000250"/>
    <property type="project" value="UniProtKB"/>
</dbReference>
<dbReference type="GO" id="GO:0019827">
    <property type="term" value="P:stem cell population maintenance"/>
    <property type="evidence" value="ECO:0000250"/>
    <property type="project" value="UniProtKB"/>
</dbReference>
<dbReference type="GO" id="GO:0006368">
    <property type="term" value="P:transcription elongation by RNA polymerase II"/>
    <property type="evidence" value="ECO:0000250"/>
    <property type="project" value="UniProtKB"/>
</dbReference>
<dbReference type="CDD" id="cd22249">
    <property type="entry name" value="UDM1_RNF168_RNF169-like"/>
    <property type="match status" value="1"/>
</dbReference>
<dbReference type="FunFam" id="1.25.40.10:FF:000089">
    <property type="entry name" value="CTR9 homolog, Paf1/RNA polymerase II complex component"/>
    <property type="match status" value="1"/>
</dbReference>
<dbReference type="FunFam" id="1.25.40.10:FF:000162">
    <property type="entry name" value="CTR9 homolog, Paf1/RNA polymerase II complex component"/>
    <property type="match status" value="1"/>
</dbReference>
<dbReference type="FunFam" id="1.25.40.10:FF:001026">
    <property type="entry name" value="CTR9 homolog, Paf1/RNA polymerase II complex component"/>
    <property type="match status" value="1"/>
</dbReference>
<dbReference type="Gene3D" id="1.25.40.10">
    <property type="entry name" value="Tetratricopeptide repeat domain"/>
    <property type="match status" value="3"/>
</dbReference>
<dbReference type="InterPro" id="IPR031101">
    <property type="entry name" value="Ctr9"/>
</dbReference>
<dbReference type="InterPro" id="IPR011990">
    <property type="entry name" value="TPR-like_helical_dom_sf"/>
</dbReference>
<dbReference type="InterPro" id="IPR019734">
    <property type="entry name" value="TPR_rpt"/>
</dbReference>
<dbReference type="PANTHER" id="PTHR14027">
    <property type="entry name" value="RNA POLYMERASE-ASSOCIATED PROTEIN CTR9"/>
    <property type="match status" value="1"/>
</dbReference>
<dbReference type="PANTHER" id="PTHR14027:SF2">
    <property type="entry name" value="RNA POLYMERASE-ASSOCIATED PROTEIN CTR9 HOMOLOG"/>
    <property type="match status" value="1"/>
</dbReference>
<dbReference type="Pfam" id="PF13374">
    <property type="entry name" value="TPR_10"/>
    <property type="match status" value="1"/>
</dbReference>
<dbReference type="Pfam" id="PF13432">
    <property type="entry name" value="TPR_16"/>
    <property type="match status" value="1"/>
</dbReference>
<dbReference type="Pfam" id="PF14559">
    <property type="entry name" value="TPR_19"/>
    <property type="match status" value="2"/>
</dbReference>
<dbReference type="Pfam" id="PF13181">
    <property type="entry name" value="TPR_8"/>
    <property type="match status" value="1"/>
</dbReference>
<dbReference type="SMART" id="SM00028">
    <property type="entry name" value="TPR"/>
    <property type="match status" value="11"/>
</dbReference>
<dbReference type="SUPFAM" id="SSF81901">
    <property type="entry name" value="HCP-like"/>
    <property type="match status" value="1"/>
</dbReference>
<dbReference type="SUPFAM" id="SSF48452">
    <property type="entry name" value="TPR-like"/>
    <property type="match status" value="3"/>
</dbReference>
<dbReference type="PROSITE" id="PS50005">
    <property type="entry name" value="TPR"/>
    <property type="match status" value="10"/>
</dbReference>
<dbReference type="PROSITE" id="PS50293">
    <property type="entry name" value="TPR_REGION"/>
    <property type="match status" value="1"/>
</dbReference>
<comment type="function">
    <text evidence="2">Component of the PAF1 complex (PAF1C) which has multiple functions during transcription by RNA polymerase II (By similarity). PAF1C associates with RNA polymerase II, is involved in transcriptional elongation and in histone modifications including methylation on histone H3 'Lys-4' (H3K4me3) (By similarity).</text>
</comment>
<comment type="subunit">
    <text evidence="1 2">Component of the PAF1 complex, which at least consists of cdc73, paf1, leo1, ctr9 and rtf1 (By similarity). The PAF1 complex interacts with PHF5A (By similarity).</text>
</comment>
<comment type="subcellular location">
    <subcellularLocation>
        <location evidence="1">Nucleus speckle</location>
    </subcellularLocation>
</comment>
<protein>
    <recommendedName>
        <fullName>RNA polymerase-associated protein CTR9 homolog</fullName>
    </recommendedName>
    <alternativeName>
        <fullName>SH2 domain-binding protein 1</fullName>
    </alternativeName>
</protein>
<keyword id="KW-0539">Nucleus</keyword>
<keyword id="KW-1185">Reference proteome</keyword>
<keyword id="KW-0677">Repeat</keyword>
<keyword id="KW-0802">TPR repeat</keyword>
<keyword id="KW-0804">Transcription</keyword>
<keyword id="KW-0805">Transcription regulation</keyword>